<name>RL18_XANAC</name>
<reference key="1">
    <citation type="journal article" date="2002" name="Nature">
        <title>Comparison of the genomes of two Xanthomonas pathogens with differing host specificities.</title>
        <authorList>
            <person name="da Silva A.C.R."/>
            <person name="Ferro J.A."/>
            <person name="Reinach F.C."/>
            <person name="Farah C.S."/>
            <person name="Furlan L.R."/>
            <person name="Quaggio R.B."/>
            <person name="Monteiro-Vitorello C.B."/>
            <person name="Van Sluys M.A."/>
            <person name="Almeida N.F. Jr."/>
            <person name="Alves L.M.C."/>
            <person name="do Amaral A.M."/>
            <person name="Bertolini M.C."/>
            <person name="Camargo L.E.A."/>
            <person name="Camarotte G."/>
            <person name="Cannavan F."/>
            <person name="Cardozo J."/>
            <person name="Chambergo F."/>
            <person name="Ciapina L.P."/>
            <person name="Cicarelli R.M.B."/>
            <person name="Coutinho L.L."/>
            <person name="Cursino-Santos J.R."/>
            <person name="El-Dorry H."/>
            <person name="Faria J.B."/>
            <person name="Ferreira A.J.S."/>
            <person name="Ferreira R.C.C."/>
            <person name="Ferro M.I.T."/>
            <person name="Formighieri E.F."/>
            <person name="Franco M.C."/>
            <person name="Greggio C.C."/>
            <person name="Gruber A."/>
            <person name="Katsuyama A.M."/>
            <person name="Kishi L.T."/>
            <person name="Leite R.P."/>
            <person name="Lemos E.G.M."/>
            <person name="Lemos M.V.F."/>
            <person name="Locali E.C."/>
            <person name="Machado M.A."/>
            <person name="Madeira A.M.B.N."/>
            <person name="Martinez-Rossi N.M."/>
            <person name="Martins E.C."/>
            <person name="Meidanis J."/>
            <person name="Menck C.F.M."/>
            <person name="Miyaki C.Y."/>
            <person name="Moon D.H."/>
            <person name="Moreira L.M."/>
            <person name="Novo M.T.M."/>
            <person name="Okura V.K."/>
            <person name="Oliveira M.C."/>
            <person name="Oliveira V.R."/>
            <person name="Pereira H.A."/>
            <person name="Rossi A."/>
            <person name="Sena J.A.D."/>
            <person name="Silva C."/>
            <person name="de Souza R.F."/>
            <person name="Spinola L.A.F."/>
            <person name="Takita M.A."/>
            <person name="Tamura R.E."/>
            <person name="Teixeira E.C."/>
            <person name="Tezza R.I.D."/>
            <person name="Trindade dos Santos M."/>
            <person name="Truffi D."/>
            <person name="Tsai S.M."/>
            <person name="White F.F."/>
            <person name="Setubal J.C."/>
            <person name="Kitajima J.P."/>
        </authorList>
    </citation>
    <scope>NUCLEOTIDE SEQUENCE [LARGE SCALE GENOMIC DNA]</scope>
    <source>
        <strain>306</strain>
    </source>
</reference>
<organism>
    <name type="scientific">Xanthomonas axonopodis pv. citri (strain 306)</name>
    <dbReference type="NCBI Taxonomy" id="190486"/>
    <lineage>
        <taxon>Bacteria</taxon>
        <taxon>Pseudomonadati</taxon>
        <taxon>Pseudomonadota</taxon>
        <taxon>Gammaproteobacteria</taxon>
        <taxon>Lysobacterales</taxon>
        <taxon>Lysobacteraceae</taxon>
        <taxon>Xanthomonas</taxon>
    </lineage>
</organism>
<evidence type="ECO:0000255" key="1">
    <source>
        <dbReference type="HAMAP-Rule" id="MF_01337"/>
    </source>
</evidence>
<evidence type="ECO:0000305" key="2"/>
<proteinExistence type="inferred from homology"/>
<sequence>MSINKNIARLRRAKSTRAHIRELGVARLSVLRTGQHLYAQVFTADGSKVIAAANTLQADVKDGLKNGKNSDAAAKVGKLIAERAKAAGIEKVAFDRSGYRYHGRIKALADAAREGGLQF</sequence>
<keyword id="KW-0687">Ribonucleoprotein</keyword>
<keyword id="KW-0689">Ribosomal protein</keyword>
<keyword id="KW-0694">RNA-binding</keyword>
<keyword id="KW-0699">rRNA-binding</keyword>
<comment type="function">
    <text evidence="1">This is one of the proteins that bind and probably mediate the attachment of the 5S RNA into the large ribosomal subunit, where it forms part of the central protuberance.</text>
</comment>
<comment type="subunit">
    <text evidence="1">Part of the 50S ribosomal subunit; part of the 5S rRNA/L5/L18/L25 subcomplex. Contacts the 5S and 23S rRNAs.</text>
</comment>
<comment type="similarity">
    <text evidence="1">Belongs to the universal ribosomal protein uL18 family.</text>
</comment>
<dbReference type="EMBL" id="AE008923">
    <property type="protein sequence ID" value="AAM35871.1"/>
    <property type="molecule type" value="Genomic_DNA"/>
</dbReference>
<dbReference type="RefSeq" id="WP_003486684.1">
    <property type="nucleotide sequence ID" value="NC_003919.1"/>
</dbReference>
<dbReference type="SMR" id="Q8PNR1"/>
<dbReference type="GeneID" id="97509352"/>
<dbReference type="KEGG" id="xac:XAC0988"/>
<dbReference type="eggNOG" id="COG0256">
    <property type="taxonomic scope" value="Bacteria"/>
</dbReference>
<dbReference type="HOGENOM" id="CLU_098841_0_1_6"/>
<dbReference type="Proteomes" id="UP000000576">
    <property type="component" value="Chromosome"/>
</dbReference>
<dbReference type="GO" id="GO:0022625">
    <property type="term" value="C:cytosolic large ribosomal subunit"/>
    <property type="evidence" value="ECO:0007669"/>
    <property type="project" value="TreeGrafter"/>
</dbReference>
<dbReference type="GO" id="GO:0008097">
    <property type="term" value="F:5S rRNA binding"/>
    <property type="evidence" value="ECO:0007669"/>
    <property type="project" value="TreeGrafter"/>
</dbReference>
<dbReference type="GO" id="GO:0003735">
    <property type="term" value="F:structural constituent of ribosome"/>
    <property type="evidence" value="ECO:0007669"/>
    <property type="project" value="InterPro"/>
</dbReference>
<dbReference type="GO" id="GO:0006412">
    <property type="term" value="P:translation"/>
    <property type="evidence" value="ECO:0007669"/>
    <property type="project" value="UniProtKB-UniRule"/>
</dbReference>
<dbReference type="CDD" id="cd00432">
    <property type="entry name" value="Ribosomal_L18_L5e"/>
    <property type="match status" value="1"/>
</dbReference>
<dbReference type="FunFam" id="3.30.420.100:FF:000001">
    <property type="entry name" value="50S ribosomal protein L18"/>
    <property type="match status" value="1"/>
</dbReference>
<dbReference type="Gene3D" id="3.30.420.100">
    <property type="match status" value="1"/>
</dbReference>
<dbReference type="HAMAP" id="MF_01337_B">
    <property type="entry name" value="Ribosomal_uL18_B"/>
    <property type="match status" value="1"/>
</dbReference>
<dbReference type="InterPro" id="IPR004389">
    <property type="entry name" value="Ribosomal_uL18_bac-type"/>
</dbReference>
<dbReference type="InterPro" id="IPR005484">
    <property type="entry name" value="Ribosomal_uL18_bac/euk"/>
</dbReference>
<dbReference type="NCBIfam" id="TIGR00060">
    <property type="entry name" value="L18_bact"/>
    <property type="match status" value="1"/>
</dbReference>
<dbReference type="PANTHER" id="PTHR12899">
    <property type="entry name" value="39S RIBOSOMAL PROTEIN L18, MITOCHONDRIAL"/>
    <property type="match status" value="1"/>
</dbReference>
<dbReference type="PANTHER" id="PTHR12899:SF3">
    <property type="entry name" value="LARGE RIBOSOMAL SUBUNIT PROTEIN UL18M"/>
    <property type="match status" value="1"/>
</dbReference>
<dbReference type="Pfam" id="PF00861">
    <property type="entry name" value="Ribosomal_L18p"/>
    <property type="match status" value="1"/>
</dbReference>
<dbReference type="SUPFAM" id="SSF53137">
    <property type="entry name" value="Translational machinery components"/>
    <property type="match status" value="1"/>
</dbReference>
<protein>
    <recommendedName>
        <fullName evidence="1">Large ribosomal subunit protein uL18</fullName>
    </recommendedName>
    <alternativeName>
        <fullName evidence="2">50S ribosomal protein L18</fullName>
    </alternativeName>
</protein>
<feature type="chain" id="PRO_0000131390" description="Large ribosomal subunit protein uL18">
    <location>
        <begin position="1"/>
        <end position="119"/>
    </location>
</feature>
<accession>Q8PNR1</accession>
<gene>
    <name evidence="1" type="primary">rplR</name>
    <name type="ordered locus">XAC0988</name>
</gene>